<comment type="function">
    <text evidence="2 6 8">Sodium-independent sulfate anion transporter (PubMed:12713736, PubMed:27125215). Can transport other anions including bicarbonate, thiosulfate and oxalate by mediating sulfate-thiosulfate, sulfate-hydrogencarbonate and sulfate-oxalate anion exchange (PubMed:12713736, PubMed:27125215). Mediates oxalate-hydrogencarbonate anion exchange (By similarity).</text>
</comment>
<comment type="catalytic activity">
    <reaction evidence="8">
        <text>thiosulfate(in) + sulfate(out) = thiosulfate(out) + sulfate(in)</text>
        <dbReference type="Rhea" id="RHEA:73215"/>
        <dbReference type="ChEBI" id="CHEBI:16189"/>
        <dbReference type="ChEBI" id="CHEBI:33542"/>
    </reaction>
</comment>
<comment type="catalytic activity">
    <reaction evidence="8">
        <text>2 hydrogencarbonate(out) + sulfate(in) = 2 hydrogencarbonate(in) + sulfate(out)</text>
        <dbReference type="Rhea" id="RHEA:72387"/>
        <dbReference type="ChEBI" id="CHEBI:16189"/>
        <dbReference type="ChEBI" id="CHEBI:17544"/>
    </reaction>
</comment>
<comment type="catalytic activity">
    <reaction evidence="6 8">
        <text>oxalate(in) + sulfate(out) = oxalate(out) + sulfate(in)</text>
        <dbReference type="Rhea" id="RHEA:72275"/>
        <dbReference type="ChEBI" id="CHEBI:16189"/>
        <dbReference type="ChEBI" id="CHEBI:30623"/>
    </reaction>
</comment>
<comment type="catalytic activity">
    <reaction evidence="2">
        <text>oxalate(in) + 2 hydrogencarbonate(out) = oxalate(out) + 2 hydrogencarbonate(in)</text>
        <dbReference type="Rhea" id="RHEA:72391"/>
        <dbReference type="ChEBI" id="CHEBI:17544"/>
        <dbReference type="ChEBI" id="CHEBI:30623"/>
    </reaction>
</comment>
<comment type="interaction">
    <interactant intactId="EBI-12908340">
        <id>Q9H2B4-2</id>
    </interactant>
    <interactant intactId="EBI-2432309">
        <id>Q92876</id>
        <label>KLK6</label>
    </interactant>
    <organismsDiffer>false</organismsDiffer>
    <experiments>3</experiments>
</comment>
<comment type="interaction">
    <interactant intactId="EBI-12908340">
        <id>Q9H2B4-2</id>
    </interactant>
    <interactant intactId="EBI-12908338">
        <id>Q96JF0-2</id>
        <label>ST6GAL2</label>
    </interactant>
    <organismsDiffer>false</organismsDiffer>
    <experiments>3</experiments>
</comment>
<comment type="subcellular location">
    <subcellularLocation>
        <location evidence="2">Cell membrane</location>
        <topology evidence="3">Multi-pass membrane protein</topology>
    </subcellularLocation>
    <subcellularLocation>
        <location evidence="1">Basolateral cell membrane</location>
        <topology evidence="3">Multi-pass membrane protein</topology>
    </subcellularLocation>
</comment>
<comment type="alternative products">
    <event type="alternative splicing"/>
    <isoform>
        <id>Q9H2B4-1</id>
        <name>1</name>
        <sequence type="displayed"/>
    </isoform>
    <isoform>
        <id>Q9H2B4-2</id>
        <name>2</name>
        <sequence type="described" ref="VSP_043671 VSP_043672"/>
    </isoform>
</comment>
<comment type="tissue specificity">
    <text evidence="6">Expressed most abundantly in the kidney and liver, with lower levels in the pancreas, testis, brain, small intestine, colon, and lung.</text>
</comment>
<comment type="disease" evidence="9 10">
    <disease id="DI-04782">
        <name>Nephrolithiasis, calcium oxalate, 1</name>
        <acronym>CAON1</acronym>
        <description>A form of nephrolithiasis, a condition in which urinary supersaturation leads to stone formation in the urinary system. Patients manifest acute renal colic with severe pain originating in the flank. Patients with small, non-obstructing stones or those with staghorn calculi may be asymptomatic. The majority of renal calculi contain calcium. CAON1 is characterized by calcium oxalate kidney stones.</description>
        <dbReference type="MIM" id="167030"/>
    </disease>
    <text>The disease is caused by variants affecting the gene represented in this entry.</text>
</comment>
<comment type="disease" evidence="10">
    <disease id="DI-06685">
        <name>Hypersulfaturia</name>
        <acronym>HYSULF</acronym>
        <description>An autosomal recessive inborn error of sulfate homeostasis resulting in urinary sulfate wasting and low plasma sulfate. Clinical features include costochondritis, perichondritis of the costovertebral joints, and chest pain.</description>
        <dbReference type="MIM" id="620372"/>
    </disease>
    <text>The disease is caused by variants affecting the gene represented in this entry.</text>
</comment>
<comment type="similarity">
    <text evidence="13">Belongs to the SLC26A/SulP transporter (TC 2.A.53) family.</text>
</comment>
<reference key="1">
    <citation type="journal article" date="2000" name="Genomics">
        <title>Mapping of five new putative anion transporter genes in human and characterization of SLC26A6, a candidate gene for pancreatic anion exchanger.</title>
        <authorList>
            <person name="Lohi H."/>
            <person name="Kujala M."/>
            <person name="Kerkelae E."/>
            <person name="Saarialho-Kere U."/>
            <person name="Kestilae M."/>
            <person name="Kere J."/>
        </authorList>
    </citation>
    <scope>NUCLEOTIDE SEQUENCE [MRNA] (ISOFORM 1)</scope>
    <source>
        <tissue>Liver</tissue>
    </source>
</reference>
<reference key="2">
    <citation type="journal article" date="2003" name="DNA Cell Biol.">
        <title>Characterization of the human sulfate anion transporter (hsat-1) protein and gene (SAT1; SLC26A1).</title>
        <authorList>
            <person name="Regeer R.R."/>
            <person name="Lee A."/>
            <person name="Markovich D."/>
        </authorList>
    </citation>
    <scope>NUCLEOTIDE SEQUENCE [MRNA] (ISOFORM 1)</scope>
    <scope>FUNCTION</scope>
    <scope>TISSUE SPECIFICITY</scope>
    <scope>TRANSPORTER ACTIVITY</scope>
    <source>
        <tissue>Kidney</tissue>
    </source>
</reference>
<reference key="3">
    <citation type="journal article" date="2004" name="Nat. Genet.">
        <title>Complete sequencing and characterization of 21,243 full-length human cDNAs.</title>
        <authorList>
            <person name="Ota T."/>
            <person name="Suzuki Y."/>
            <person name="Nishikawa T."/>
            <person name="Otsuki T."/>
            <person name="Sugiyama T."/>
            <person name="Irie R."/>
            <person name="Wakamatsu A."/>
            <person name="Hayashi K."/>
            <person name="Sato H."/>
            <person name="Nagai K."/>
            <person name="Kimura K."/>
            <person name="Makita H."/>
            <person name="Sekine M."/>
            <person name="Obayashi M."/>
            <person name="Nishi T."/>
            <person name="Shibahara T."/>
            <person name="Tanaka T."/>
            <person name="Ishii S."/>
            <person name="Yamamoto J."/>
            <person name="Saito K."/>
            <person name="Kawai Y."/>
            <person name="Isono Y."/>
            <person name="Nakamura Y."/>
            <person name="Nagahari K."/>
            <person name="Murakami K."/>
            <person name="Yasuda T."/>
            <person name="Iwayanagi T."/>
            <person name="Wagatsuma M."/>
            <person name="Shiratori A."/>
            <person name="Sudo H."/>
            <person name="Hosoiri T."/>
            <person name="Kaku Y."/>
            <person name="Kodaira H."/>
            <person name="Kondo H."/>
            <person name="Sugawara M."/>
            <person name="Takahashi M."/>
            <person name="Kanda K."/>
            <person name="Yokoi T."/>
            <person name="Furuya T."/>
            <person name="Kikkawa E."/>
            <person name="Omura Y."/>
            <person name="Abe K."/>
            <person name="Kamihara K."/>
            <person name="Katsuta N."/>
            <person name="Sato K."/>
            <person name="Tanikawa M."/>
            <person name="Yamazaki M."/>
            <person name="Ninomiya K."/>
            <person name="Ishibashi T."/>
            <person name="Yamashita H."/>
            <person name="Murakawa K."/>
            <person name="Fujimori K."/>
            <person name="Tanai H."/>
            <person name="Kimata M."/>
            <person name="Watanabe M."/>
            <person name="Hiraoka S."/>
            <person name="Chiba Y."/>
            <person name="Ishida S."/>
            <person name="Ono Y."/>
            <person name="Takiguchi S."/>
            <person name="Watanabe S."/>
            <person name="Yosida M."/>
            <person name="Hotuta T."/>
            <person name="Kusano J."/>
            <person name="Kanehori K."/>
            <person name="Takahashi-Fujii A."/>
            <person name="Hara H."/>
            <person name="Tanase T.-O."/>
            <person name="Nomura Y."/>
            <person name="Togiya S."/>
            <person name="Komai F."/>
            <person name="Hara R."/>
            <person name="Takeuchi K."/>
            <person name="Arita M."/>
            <person name="Imose N."/>
            <person name="Musashino K."/>
            <person name="Yuuki H."/>
            <person name="Oshima A."/>
            <person name="Sasaki N."/>
            <person name="Aotsuka S."/>
            <person name="Yoshikawa Y."/>
            <person name="Matsunawa H."/>
            <person name="Ichihara T."/>
            <person name="Shiohata N."/>
            <person name="Sano S."/>
            <person name="Moriya S."/>
            <person name="Momiyama H."/>
            <person name="Satoh N."/>
            <person name="Takami S."/>
            <person name="Terashima Y."/>
            <person name="Suzuki O."/>
            <person name="Nakagawa S."/>
            <person name="Senoh A."/>
            <person name="Mizoguchi H."/>
            <person name="Goto Y."/>
            <person name="Shimizu F."/>
            <person name="Wakebe H."/>
            <person name="Hishigaki H."/>
            <person name="Watanabe T."/>
            <person name="Sugiyama A."/>
            <person name="Takemoto M."/>
            <person name="Kawakami B."/>
            <person name="Yamazaki M."/>
            <person name="Watanabe K."/>
            <person name="Kumagai A."/>
            <person name="Itakura S."/>
            <person name="Fukuzumi Y."/>
            <person name="Fujimori Y."/>
            <person name="Komiyama M."/>
            <person name="Tashiro H."/>
            <person name="Tanigami A."/>
            <person name="Fujiwara T."/>
            <person name="Ono T."/>
            <person name="Yamada K."/>
            <person name="Fujii Y."/>
            <person name="Ozaki K."/>
            <person name="Hirao M."/>
            <person name="Ohmori Y."/>
            <person name="Kawabata A."/>
            <person name="Hikiji T."/>
            <person name="Kobatake N."/>
            <person name="Inagaki H."/>
            <person name="Ikema Y."/>
            <person name="Okamoto S."/>
            <person name="Okitani R."/>
            <person name="Kawakami T."/>
            <person name="Noguchi S."/>
            <person name="Itoh T."/>
            <person name="Shigeta K."/>
            <person name="Senba T."/>
            <person name="Matsumura K."/>
            <person name="Nakajima Y."/>
            <person name="Mizuno T."/>
            <person name="Morinaga M."/>
            <person name="Sasaki M."/>
            <person name="Togashi T."/>
            <person name="Oyama M."/>
            <person name="Hata H."/>
            <person name="Watanabe M."/>
            <person name="Komatsu T."/>
            <person name="Mizushima-Sugano J."/>
            <person name="Satoh T."/>
            <person name="Shirai Y."/>
            <person name="Takahashi Y."/>
            <person name="Nakagawa K."/>
            <person name="Okumura K."/>
            <person name="Nagase T."/>
            <person name="Nomura N."/>
            <person name="Kikuchi H."/>
            <person name="Masuho Y."/>
            <person name="Yamashita R."/>
            <person name="Nakai K."/>
            <person name="Yada T."/>
            <person name="Nakamura Y."/>
            <person name="Ohara O."/>
            <person name="Isogai T."/>
            <person name="Sugano S."/>
        </authorList>
    </citation>
    <scope>NUCLEOTIDE SEQUENCE [LARGE SCALE MRNA] (ISOFORM 1)</scope>
    <scope>VARIANT ARG-556</scope>
    <source>
        <tissue>Liver</tissue>
    </source>
</reference>
<reference key="4">
    <citation type="journal article" date="2005" name="Nature">
        <title>Generation and annotation of the DNA sequences of human chromosomes 2 and 4.</title>
        <authorList>
            <person name="Hillier L.W."/>
            <person name="Graves T.A."/>
            <person name="Fulton R.S."/>
            <person name="Fulton L.A."/>
            <person name="Pepin K.H."/>
            <person name="Minx P."/>
            <person name="Wagner-McPherson C."/>
            <person name="Layman D."/>
            <person name="Wylie K."/>
            <person name="Sekhon M."/>
            <person name="Becker M.C."/>
            <person name="Fewell G.A."/>
            <person name="Delehaunty K.D."/>
            <person name="Miner T.L."/>
            <person name="Nash W.E."/>
            <person name="Kremitzki C."/>
            <person name="Oddy L."/>
            <person name="Du H."/>
            <person name="Sun H."/>
            <person name="Bradshaw-Cordum H."/>
            <person name="Ali J."/>
            <person name="Carter J."/>
            <person name="Cordes M."/>
            <person name="Harris A."/>
            <person name="Isak A."/>
            <person name="van Brunt A."/>
            <person name="Nguyen C."/>
            <person name="Du F."/>
            <person name="Courtney L."/>
            <person name="Kalicki J."/>
            <person name="Ozersky P."/>
            <person name="Abbott S."/>
            <person name="Armstrong J."/>
            <person name="Belter E.A."/>
            <person name="Caruso L."/>
            <person name="Cedroni M."/>
            <person name="Cotton M."/>
            <person name="Davidson T."/>
            <person name="Desai A."/>
            <person name="Elliott G."/>
            <person name="Erb T."/>
            <person name="Fronick C."/>
            <person name="Gaige T."/>
            <person name="Haakenson W."/>
            <person name="Haglund K."/>
            <person name="Holmes A."/>
            <person name="Harkins R."/>
            <person name="Kim K."/>
            <person name="Kruchowski S.S."/>
            <person name="Strong C.M."/>
            <person name="Grewal N."/>
            <person name="Goyea E."/>
            <person name="Hou S."/>
            <person name="Levy A."/>
            <person name="Martinka S."/>
            <person name="Mead K."/>
            <person name="McLellan M.D."/>
            <person name="Meyer R."/>
            <person name="Randall-Maher J."/>
            <person name="Tomlinson C."/>
            <person name="Dauphin-Kohlberg S."/>
            <person name="Kozlowicz-Reilly A."/>
            <person name="Shah N."/>
            <person name="Swearengen-Shahid S."/>
            <person name="Snider J."/>
            <person name="Strong J.T."/>
            <person name="Thompson J."/>
            <person name="Yoakum M."/>
            <person name="Leonard S."/>
            <person name="Pearman C."/>
            <person name="Trani L."/>
            <person name="Radionenko M."/>
            <person name="Waligorski J.E."/>
            <person name="Wang C."/>
            <person name="Rock S.M."/>
            <person name="Tin-Wollam A.-M."/>
            <person name="Maupin R."/>
            <person name="Latreille P."/>
            <person name="Wendl M.C."/>
            <person name="Yang S.-P."/>
            <person name="Pohl C."/>
            <person name="Wallis J.W."/>
            <person name="Spieth J."/>
            <person name="Bieri T.A."/>
            <person name="Berkowicz N."/>
            <person name="Nelson J.O."/>
            <person name="Osborne J."/>
            <person name="Ding L."/>
            <person name="Meyer R."/>
            <person name="Sabo A."/>
            <person name="Shotland Y."/>
            <person name="Sinha P."/>
            <person name="Wohldmann P.E."/>
            <person name="Cook L.L."/>
            <person name="Hickenbotham M.T."/>
            <person name="Eldred J."/>
            <person name="Williams D."/>
            <person name="Jones T.A."/>
            <person name="She X."/>
            <person name="Ciccarelli F.D."/>
            <person name="Izaurralde E."/>
            <person name="Taylor J."/>
            <person name="Schmutz J."/>
            <person name="Myers R.M."/>
            <person name="Cox D.R."/>
            <person name="Huang X."/>
            <person name="McPherson J.D."/>
            <person name="Mardis E.R."/>
            <person name="Clifton S.W."/>
            <person name="Warren W.C."/>
            <person name="Chinwalla A.T."/>
            <person name="Eddy S.R."/>
            <person name="Marra M.A."/>
            <person name="Ovcharenko I."/>
            <person name="Furey T.S."/>
            <person name="Miller W."/>
            <person name="Eichler E.E."/>
            <person name="Bork P."/>
            <person name="Suyama M."/>
            <person name="Torrents D."/>
            <person name="Waterston R.H."/>
            <person name="Wilson R.K."/>
        </authorList>
    </citation>
    <scope>NUCLEOTIDE SEQUENCE [LARGE SCALE GENOMIC DNA]</scope>
</reference>
<reference key="5">
    <citation type="submission" date="2005-09" db="EMBL/GenBank/DDBJ databases">
        <authorList>
            <person name="Mural R.J."/>
            <person name="Istrail S."/>
            <person name="Sutton G.G."/>
            <person name="Florea L."/>
            <person name="Halpern A.L."/>
            <person name="Mobarry C.M."/>
            <person name="Lippert R."/>
            <person name="Walenz B."/>
            <person name="Shatkay H."/>
            <person name="Dew I."/>
            <person name="Miller J.R."/>
            <person name="Flanigan M.J."/>
            <person name="Edwards N.J."/>
            <person name="Bolanos R."/>
            <person name="Fasulo D."/>
            <person name="Halldorsson B.V."/>
            <person name="Hannenhalli S."/>
            <person name="Turner R."/>
            <person name="Yooseph S."/>
            <person name="Lu F."/>
            <person name="Nusskern D.R."/>
            <person name="Shue B.C."/>
            <person name="Zheng X.H."/>
            <person name="Zhong F."/>
            <person name="Delcher A.L."/>
            <person name="Huson D.H."/>
            <person name="Kravitz S.A."/>
            <person name="Mouchard L."/>
            <person name="Reinert K."/>
            <person name="Remington K.A."/>
            <person name="Clark A.G."/>
            <person name="Waterman M.S."/>
            <person name="Eichler E.E."/>
            <person name="Adams M.D."/>
            <person name="Hunkapiller M.W."/>
            <person name="Myers E.W."/>
            <person name="Venter J.C."/>
        </authorList>
    </citation>
    <scope>NUCLEOTIDE SEQUENCE [LARGE SCALE GENOMIC DNA]</scope>
    <scope>VARIANT ARG-556</scope>
</reference>
<reference key="6">
    <citation type="journal article" date="2004" name="Genome Res.">
        <title>The status, quality, and expansion of the NIH full-length cDNA project: the Mammalian Gene Collection (MGC).</title>
        <authorList>
            <consortium name="The MGC Project Team"/>
        </authorList>
    </citation>
    <scope>NUCLEOTIDE SEQUENCE [LARGE SCALE MRNA] (ISOFORM 2)</scope>
    <source>
        <tissue>Lung</tissue>
    </source>
</reference>
<reference key="7">
    <citation type="journal article" date="2014" name="J. Proteomics">
        <title>An enzyme assisted RP-RPLC approach for in-depth analysis of human liver phosphoproteome.</title>
        <authorList>
            <person name="Bian Y."/>
            <person name="Song C."/>
            <person name="Cheng K."/>
            <person name="Dong M."/>
            <person name="Wang F."/>
            <person name="Huang J."/>
            <person name="Sun D."/>
            <person name="Wang L."/>
            <person name="Ye M."/>
            <person name="Zou H."/>
        </authorList>
    </citation>
    <scope>IDENTIFICATION BY MASS SPECTROMETRY [LARGE SCALE ANALYSIS]</scope>
    <source>
        <tissue>Liver</tissue>
    </source>
</reference>
<reference key="8">
    <citation type="journal article" date="2016" name="Pflugers Arch.">
        <title>Extracellular Cl(-) regulates human SO4 (2-)/anion exchanger SLC26A1 by altering pH sensitivity of anion transport.</title>
        <authorList>
            <person name="Wu M."/>
            <person name="Heneghan J.F."/>
            <person name="Vandorpe D.H."/>
            <person name="Escobar L.I."/>
            <person name="Wu B.L."/>
            <person name="Alper S.L."/>
        </authorList>
    </citation>
    <scope>FUNCTION</scope>
    <scope>TRANSPORTER ACTIVITY</scope>
</reference>
<reference key="9">
    <citation type="journal article" date="2016" name="Am. J. Hum. Genet.">
        <title>Mutations in SLC26A1 Cause Nephrolithiasis.</title>
        <authorList>
            <person name="Gee H.Y."/>
            <person name="Jun I."/>
            <person name="Braun D.A."/>
            <person name="Lawson J.A."/>
            <person name="Halbritter J."/>
            <person name="Shril S."/>
            <person name="Nelson C.P."/>
            <person name="Tan W."/>
            <person name="Stein D."/>
            <person name="Wassner A.J."/>
            <person name="Ferguson M.A."/>
            <person name="Gucev Z."/>
            <person name="Sayer J.A."/>
            <person name="Milosevic D."/>
            <person name="Baum M."/>
            <person name="Tasic V."/>
            <person name="Lee M.G."/>
            <person name="Hildebrandt F."/>
        </authorList>
    </citation>
    <scope>INVOLVEMENT IN CAON1</scope>
    <scope>VARIANTS CAON1 THR-56; MET-185 AND LEU-358</scope>
</reference>
<reference key="10">
    <citation type="journal article" date="2023" name="J. Clin. Invest.">
        <title>SLC26A1 is a major determinant of sulfate homeostasis in humans.</title>
        <authorList>
            <person name="Pfau A."/>
            <person name="Lopez-Cayuqueo K.I."/>
            <person name="Scherer N."/>
            <person name="Wuttke M."/>
            <person name="Wernstedt A."/>
            <person name="Gonzalez Fassrainer D."/>
            <person name="Smith D.E."/>
            <person name="van de Kamp J.M."/>
            <person name="Ziegeler K."/>
            <person name="Eckardt K.U."/>
            <person name="Luft F.C."/>
            <person name="Aronson P.S."/>
            <person name="Koettgen A."/>
            <person name="Jentsch T.J."/>
            <person name="Knauf F."/>
        </authorList>
    </citation>
    <scope>INVOLVEMENT IN HYSULF</scope>
    <scope>VARIANT HYSULF PRO-275</scope>
    <scope>CHARACTERIZATION OF VARIANT HYSULF PRO-275</scope>
    <scope>CHARACTERIZATION OF VARIANTS CAON1 MET-185 AND LEU-358</scope>
    <scope>CHARACTERIZATION OF VARIANTS LEU-237; PRO-348; LEU-358; LEU-461 AND CYS-515</scope>
</reference>
<proteinExistence type="evidence at protein level"/>
<sequence length="701" mass="75016">MDESPEPLQQGRGPVPVRRQRPAPRGLREMLKARLWCSCSCSVLCVRALVQDLLPATRWLRQYRPREYLAGDVMSGLVIGIILVPQAIAYSLLAGLQPIYSLYTSFFANLIYFLMGTSRHVSVGIFSLLCLMVGQVVDRELQLAGFDPSQDGLQPGANSSTLNGSAAMLDCGRDCYAIRVATALTLMTGLYQVLMGVLRLGFVSAYLSQPLLDGFAMGASVTILTSQLKHLLGVRIPRHQGPGMVVLTWLSLLRGAGQANVCDVVTSTVCLAVLLAAKELSDRYRHRLRVPLPTELLVIVVATLVSHFGQLHKRFGSSVAGDIPTGFMPPQVPEPRLMQRVALDAVALALVAAAFSISLAEMFARSHGYSVRANQELLAVGCCNVLPAFLHCFATSAALAKSLVKTATGCRTQLSSVVSATVVLLVLLALAPLFHDLQRSVLACVIVVSLRGALRKVWDLPRLWRMSPADALVWAGTAATCMLVSTEAGLLAGVILSLLSLAGRTQRPRTALLARIGDTAFYEDATEFEGLVPEPGVRVFRFGGPLYYANKDFFLQSLYSLTGLDAGCMAARRKEGGSETGVGEGGPAQGEDLGPVSTRAALVPAAAGFHTVVIDCAPLLFLDAAGVSTLQDLRRDYGALGISLLLACCSPPVRDILSRGGFLGEGPGDTAEEEQLFLSVHDAVQTARARHRELEATDAHL</sequence>
<accession>Q9H2B4</accession>
<accession>A8K9N2</accession>
<accession>Q7Z5R3</accession>
<accession>Q96BK0</accession>
<feature type="chain" id="PRO_0000080155" description="Sulfate anion transporter 1">
    <location>
        <begin position="1"/>
        <end position="701"/>
    </location>
</feature>
<feature type="transmembrane region" description="Helical" evidence="3">
    <location>
        <begin position="68"/>
        <end position="90"/>
    </location>
</feature>
<feature type="transmembrane region" description="Helical" evidence="3">
    <location>
        <begin position="94"/>
        <end position="116"/>
    </location>
</feature>
<feature type="transmembrane region" description="Helical" evidence="3">
    <location>
        <begin position="176"/>
        <end position="198"/>
    </location>
</feature>
<feature type="transmembrane region" description="Helical" evidence="3">
    <location>
        <begin position="255"/>
        <end position="277"/>
    </location>
</feature>
<feature type="transmembrane region" description="Helical" evidence="3">
    <location>
        <begin position="290"/>
        <end position="309"/>
    </location>
</feature>
<feature type="transmembrane region" description="Helical" evidence="3">
    <location>
        <begin position="342"/>
        <end position="364"/>
    </location>
</feature>
<feature type="transmembrane region" description="Helical" evidence="3">
    <location>
        <begin position="377"/>
        <end position="399"/>
    </location>
</feature>
<feature type="transmembrane region" description="Helical" evidence="3">
    <location>
        <begin position="412"/>
        <end position="434"/>
    </location>
</feature>
<feature type="transmembrane region" description="Helical" evidence="3">
    <location>
        <begin position="472"/>
        <end position="494"/>
    </location>
</feature>
<feature type="domain" description="STAS" evidence="4">
    <location>
        <begin position="527"/>
        <end position="687"/>
    </location>
</feature>
<feature type="region of interest" description="Disordered" evidence="5">
    <location>
        <begin position="1"/>
        <end position="20"/>
    </location>
</feature>
<feature type="glycosylation site" description="N-linked (GlcNAc...) asparagine" evidence="3">
    <location>
        <position position="158"/>
    </location>
</feature>
<feature type="glycosylation site" description="N-linked (GlcNAc...) asparagine" evidence="3">
    <location>
        <position position="163"/>
    </location>
</feature>
<feature type="splice variant" id="VSP_043671" description="In isoform 2." evidence="12">
    <original>VLMGVLRLGFVSAYLSQPLLDGFAMGASVTIL</original>
    <variation>TSWGRNSFQQHPWQLTQRSDSQELLEEEERSC</variation>
    <location>
        <begin position="193"/>
        <end position="224"/>
    </location>
</feature>
<feature type="splice variant" id="VSP_043672" description="In isoform 2." evidence="12">
    <location>
        <begin position="225"/>
        <end position="701"/>
    </location>
</feature>
<feature type="sequence variant" id="VAR_077134" description="In CAON1; uncertain significance; dbSNP:rs142573758." evidence="9">
    <original>A</original>
    <variation>T</variation>
    <location>
        <position position="56"/>
    </location>
</feature>
<feature type="sequence variant" id="VAR_077135" description="In CAON1; loss of sulfate transport when expressed in Xenopus laevis oocytes; dbSNP:rs139024319." evidence="9 10">
    <original>T</original>
    <variation>M</variation>
    <location>
        <position position="185"/>
    </location>
</feature>
<feature type="sequence variant" id="VAR_088613" description="Found in a patient with chronic kidney disease and hyposulfatemia; uncertain significance; decreased sulfate transport when expressed in Xenopus laevis oocytes; dbSNP:rs778482338." evidence="10">
    <original>P</original>
    <variation>L</variation>
    <location>
        <position position="237"/>
    </location>
</feature>
<feature type="sequence variant" id="VAR_088614" description="In HYSULF; uncertain significance; decreased sulfate transport and decreased oxalate transport when expressed in Xenopus laevis oocytes." evidence="10">
    <original>L</original>
    <variation>P</variation>
    <location>
        <position position="275"/>
    </location>
</feature>
<feature type="sequence variant" id="VAR_088615" description="Decreased sulfate transport when expressed in Xenopus laevis oocytes; dbSNP:rs148386572." evidence="10">
    <original>L</original>
    <variation>P</variation>
    <location>
        <position position="348"/>
    </location>
</feature>
<feature type="sequence variant" id="VAR_077136" description="In CAON1; decreased sulfate transport when expressed in Xenopus laevis oocytes; dbSNP:rs148832260." evidence="9 10">
    <original>S</original>
    <variation>L</variation>
    <location>
        <position position="358"/>
    </location>
</feature>
<feature type="sequence variant" id="VAR_088616" description="Found in a patient with chronic kidney disease and hyposulfatemia; uncertain significance; dbSNP:rs376705237." evidence="10">
    <original>P</original>
    <variation>L</variation>
    <location>
        <position position="461"/>
    </location>
</feature>
<feature type="sequence variant" id="VAR_088617" description="Found in a patient with chronic kidney disease and hyposulfatemia; uncertain significance; dbSNP:rs375537240." evidence="10">
    <original>R</original>
    <variation>C</variation>
    <location>
        <position position="515"/>
    </location>
</feature>
<feature type="sequence variant" id="VAR_046727" description="In dbSNP:rs3796622." evidence="7 11">
    <original>Q</original>
    <variation>R</variation>
    <location>
        <position position="556"/>
    </location>
</feature>
<feature type="sequence conflict" description="In Ref. 1; AAG22075." evidence="13" ref="1">
    <original>DL</original>
    <variation>GF</variation>
    <location>
        <begin position="459"/>
        <end position="460"/>
    </location>
</feature>
<evidence type="ECO:0000250" key="1">
    <source>
        <dbReference type="UniProtKB" id="P45380"/>
    </source>
</evidence>
<evidence type="ECO:0000250" key="2">
    <source>
        <dbReference type="UniProtKB" id="P58735"/>
    </source>
</evidence>
<evidence type="ECO:0000255" key="3"/>
<evidence type="ECO:0000255" key="4">
    <source>
        <dbReference type="PROSITE-ProRule" id="PRU00198"/>
    </source>
</evidence>
<evidence type="ECO:0000256" key="5">
    <source>
        <dbReference type="SAM" id="MobiDB-lite"/>
    </source>
</evidence>
<evidence type="ECO:0000269" key="6">
    <source>
    </source>
</evidence>
<evidence type="ECO:0000269" key="7">
    <source>
    </source>
</evidence>
<evidence type="ECO:0000269" key="8">
    <source>
    </source>
</evidence>
<evidence type="ECO:0000269" key="9">
    <source>
    </source>
</evidence>
<evidence type="ECO:0000269" key="10">
    <source>
    </source>
</evidence>
<evidence type="ECO:0000269" key="11">
    <source ref="5"/>
</evidence>
<evidence type="ECO:0000303" key="12">
    <source>
    </source>
</evidence>
<evidence type="ECO:0000305" key="13"/>
<keyword id="KW-0025">Alternative splicing</keyword>
<keyword id="KW-0039">Anion exchange</keyword>
<keyword id="KW-0050">Antiport</keyword>
<keyword id="KW-1003">Cell membrane</keyword>
<keyword id="KW-0225">Disease variant</keyword>
<keyword id="KW-0325">Glycoprotein</keyword>
<keyword id="KW-0407">Ion channel</keyword>
<keyword id="KW-0406">Ion transport</keyword>
<keyword id="KW-0472">Membrane</keyword>
<keyword id="KW-1267">Proteomics identification</keyword>
<keyword id="KW-1185">Reference proteome</keyword>
<keyword id="KW-0812">Transmembrane</keyword>
<keyword id="KW-1133">Transmembrane helix</keyword>
<keyword id="KW-0813">Transport</keyword>
<gene>
    <name type="primary">SLC26A1</name>
    <name type="synonym">SAT1</name>
</gene>
<dbReference type="EMBL" id="AF297659">
    <property type="protein sequence ID" value="AAG22075.1"/>
    <property type="molecule type" value="mRNA"/>
</dbReference>
<dbReference type="EMBL" id="AY124771">
    <property type="protein sequence ID" value="AAM94171.1"/>
    <property type="molecule type" value="mRNA"/>
</dbReference>
<dbReference type="EMBL" id="AK292747">
    <property type="protein sequence ID" value="BAF85436.1"/>
    <property type="molecule type" value="mRNA"/>
</dbReference>
<dbReference type="EMBL" id="AC019103">
    <property type="status" value="NOT_ANNOTATED_CDS"/>
    <property type="molecule type" value="Genomic_DNA"/>
</dbReference>
<dbReference type="EMBL" id="CH471131">
    <property type="protein sequence ID" value="EAW82628.1"/>
    <property type="molecule type" value="Genomic_DNA"/>
</dbReference>
<dbReference type="EMBL" id="CH471131">
    <property type="protein sequence ID" value="EAW82629.1"/>
    <property type="molecule type" value="Genomic_DNA"/>
</dbReference>
<dbReference type="EMBL" id="BC015517">
    <property type="protein sequence ID" value="AAH15517.1"/>
    <property type="molecule type" value="mRNA"/>
</dbReference>
<dbReference type="CCDS" id="CCDS33933.1">
    <molecule id="Q9H2B4-2"/>
</dbReference>
<dbReference type="CCDS" id="CCDS33934.1">
    <molecule id="Q9H2B4-1"/>
</dbReference>
<dbReference type="RefSeq" id="NP_071325.2">
    <molecule id="Q9H2B4-1"/>
    <property type="nucleotide sequence ID" value="NM_022042.3"/>
</dbReference>
<dbReference type="RefSeq" id="NP_602297.1">
    <molecule id="Q9H2B4-2"/>
    <property type="nucleotide sequence ID" value="NM_134425.4"/>
</dbReference>
<dbReference type="RefSeq" id="NP_998778.1">
    <molecule id="Q9H2B4-1"/>
    <property type="nucleotide sequence ID" value="NM_213613.4"/>
</dbReference>
<dbReference type="SMR" id="Q9H2B4"/>
<dbReference type="BioGRID" id="116071">
    <property type="interactions" value="6"/>
</dbReference>
<dbReference type="FunCoup" id="Q9H2B4">
    <property type="interactions" value="74"/>
</dbReference>
<dbReference type="IntAct" id="Q9H2B4">
    <property type="interactions" value="4"/>
</dbReference>
<dbReference type="STRING" id="9606.ENSP00000354721"/>
<dbReference type="TCDB" id="2.A.53.2.16">
    <property type="family name" value="the sulfate permease (sulp) family"/>
</dbReference>
<dbReference type="GlyCosmos" id="Q9H2B4">
    <property type="glycosylation" value="2 sites, No reported glycans"/>
</dbReference>
<dbReference type="GlyGen" id="Q9H2B4">
    <property type="glycosylation" value="2 sites"/>
</dbReference>
<dbReference type="iPTMnet" id="Q9H2B4"/>
<dbReference type="PhosphoSitePlus" id="Q9H2B4"/>
<dbReference type="SwissPalm" id="Q9H2B4"/>
<dbReference type="BioMuta" id="SLC26A1"/>
<dbReference type="DMDM" id="209572674"/>
<dbReference type="jPOST" id="Q9H2B4"/>
<dbReference type="MassIVE" id="Q9H2B4"/>
<dbReference type="PaxDb" id="9606-ENSP00000354721"/>
<dbReference type="PeptideAtlas" id="Q9H2B4"/>
<dbReference type="ProteomicsDB" id="80523">
    <molecule id="Q9H2B4-1"/>
</dbReference>
<dbReference type="ProteomicsDB" id="80524">
    <molecule id="Q9H2B4-2"/>
</dbReference>
<dbReference type="Antibodypedia" id="8230">
    <property type="antibodies" value="101 antibodies from 26 providers"/>
</dbReference>
<dbReference type="CPTC" id="Q9H2B4">
    <property type="antibodies" value="3 antibodies"/>
</dbReference>
<dbReference type="DNASU" id="10861"/>
<dbReference type="Ensembl" id="ENST00000361661.6">
    <molecule id="Q9H2B4-1"/>
    <property type="protein sequence ID" value="ENSP00000354721.2"/>
    <property type="gene ID" value="ENSG00000145217.14"/>
</dbReference>
<dbReference type="Ensembl" id="ENST00000398516.3">
    <molecule id="Q9H2B4-1"/>
    <property type="protein sequence ID" value="ENSP00000381528.2"/>
    <property type="gene ID" value="ENSG00000145217.14"/>
</dbReference>
<dbReference type="Ensembl" id="ENST00000398520.6">
    <molecule id="Q9H2B4-2"/>
    <property type="protein sequence ID" value="ENSP00000381532.2"/>
    <property type="gene ID" value="ENSG00000145217.14"/>
</dbReference>
<dbReference type="Ensembl" id="ENST00000622731.4">
    <molecule id="Q9H2B4-2"/>
    <property type="protein sequence ID" value="ENSP00000483506.1"/>
    <property type="gene ID" value="ENSG00000145217.14"/>
</dbReference>
<dbReference type="GeneID" id="10861"/>
<dbReference type="KEGG" id="hsa:10861"/>
<dbReference type="MANE-Select" id="ENST00000398516.3">
    <property type="protein sequence ID" value="ENSP00000381528.2"/>
    <property type="RefSeq nucleotide sequence ID" value="NM_022042.4"/>
    <property type="RefSeq protein sequence ID" value="NP_071325.2"/>
</dbReference>
<dbReference type="UCSC" id="uc003gbx.5">
    <molecule id="Q9H2B4-1"/>
    <property type="organism name" value="human"/>
</dbReference>
<dbReference type="AGR" id="HGNC:10993"/>
<dbReference type="CTD" id="10861"/>
<dbReference type="DisGeNET" id="10861"/>
<dbReference type="GeneCards" id="SLC26A1"/>
<dbReference type="HGNC" id="HGNC:10993">
    <property type="gene designation" value="SLC26A1"/>
</dbReference>
<dbReference type="HPA" id="ENSG00000145217">
    <property type="expression patterns" value="Tissue enhanced (liver)"/>
</dbReference>
<dbReference type="MalaCards" id="SLC26A1"/>
<dbReference type="MIM" id="167030">
    <property type="type" value="phenotype"/>
</dbReference>
<dbReference type="MIM" id="610130">
    <property type="type" value="gene"/>
</dbReference>
<dbReference type="MIM" id="620372">
    <property type="type" value="phenotype"/>
</dbReference>
<dbReference type="neXtProt" id="NX_Q9H2B4"/>
<dbReference type="OpenTargets" id="ENSG00000145217"/>
<dbReference type="PharmGKB" id="PA400"/>
<dbReference type="VEuPathDB" id="HostDB:ENSG00000145217"/>
<dbReference type="eggNOG" id="KOG0236">
    <property type="taxonomic scope" value="Eukaryota"/>
</dbReference>
<dbReference type="GeneTree" id="ENSGT01120000271864"/>
<dbReference type="HOGENOM" id="CLU_1234655_0_0_1"/>
<dbReference type="InParanoid" id="Q9H2B4"/>
<dbReference type="OMA" id="WNENQDL"/>
<dbReference type="OrthoDB" id="288203at2759"/>
<dbReference type="PAN-GO" id="Q9H2B4">
    <property type="GO annotations" value="6 GO annotations based on evolutionary models"/>
</dbReference>
<dbReference type="PhylomeDB" id="Q9H2B4"/>
<dbReference type="TreeFam" id="TF313784"/>
<dbReference type="PathwayCommons" id="Q9H2B4"/>
<dbReference type="Reactome" id="R-HSA-174362">
    <property type="pathway name" value="Transport and synthesis of PAPS"/>
</dbReference>
<dbReference type="Reactome" id="R-HSA-427601">
    <property type="pathway name" value="Multifunctional anion exchangers"/>
</dbReference>
<dbReference type="SignaLink" id="Q9H2B4"/>
<dbReference type="BioGRID-ORCS" id="10861">
    <property type="hits" value="10 hits in 1154 CRISPR screens"/>
</dbReference>
<dbReference type="ChiTaRS" id="SLC26A1">
    <property type="organism name" value="human"/>
</dbReference>
<dbReference type="GenomeRNAi" id="10861"/>
<dbReference type="Pharos" id="Q9H2B4">
    <property type="development level" value="Tbio"/>
</dbReference>
<dbReference type="PRO" id="PR:Q9H2B4"/>
<dbReference type="Proteomes" id="UP000005640">
    <property type="component" value="Chromosome 4"/>
</dbReference>
<dbReference type="RNAct" id="Q9H2B4">
    <property type="molecule type" value="protein"/>
</dbReference>
<dbReference type="Bgee" id="ENSG00000145217">
    <property type="expression patterns" value="Expressed in right adrenal gland cortex and 92 other cell types or tissues"/>
</dbReference>
<dbReference type="GO" id="GO:0016323">
    <property type="term" value="C:basolateral plasma membrane"/>
    <property type="evidence" value="ECO:0000250"/>
    <property type="project" value="UniProtKB"/>
</dbReference>
<dbReference type="GO" id="GO:0016020">
    <property type="term" value="C:membrane"/>
    <property type="evidence" value="ECO:0000304"/>
    <property type="project" value="UniProtKB"/>
</dbReference>
<dbReference type="GO" id="GO:0005886">
    <property type="term" value="C:plasma membrane"/>
    <property type="evidence" value="ECO:0000318"/>
    <property type="project" value="GO_Central"/>
</dbReference>
<dbReference type="GO" id="GO:0015106">
    <property type="term" value="F:bicarbonate transmembrane transporter activity"/>
    <property type="evidence" value="ECO:0000318"/>
    <property type="project" value="GO_Central"/>
</dbReference>
<dbReference type="GO" id="GO:0015108">
    <property type="term" value="F:chloride transmembrane transporter activity"/>
    <property type="evidence" value="ECO:0000250"/>
    <property type="project" value="UniProtKB"/>
</dbReference>
<dbReference type="GO" id="GO:0019531">
    <property type="term" value="F:oxalate transmembrane transporter activity"/>
    <property type="evidence" value="ECO:0000250"/>
    <property type="project" value="UniProtKB"/>
</dbReference>
<dbReference type="GO" id="GO:0005452">
    <property type="term" value="F:solute:inorganic anion antiporter activity"/>
    <property type="evidence" value="ECO:0000314"/>
    <property type="project" value="UniProtKB"/>
</dbReference>
<dbReference type="GO" id="GO:0015116">
    <property type="term" value="F:sulfate transmembrane transporter activity"/>
    <property type="evidence" value="ECO:0000250"/>
    <property type="project" value="UniProtKB"/>
</dbReference>
<dbReference type="GO" id="GO:0015383">
    <property type="term" value="F:sulfate:bicarbonate antiporter activity"/>
    <property type="evidence" value="ECO:0000250"/>
    <property type="project" value="UniProtKB"/>
</dbReference>
<dbReference type="GO" id="GO:1902476">
    <property type="term" value="P:chloride transmembrane transport"/>
    <property type="evidence" value="ECO:0000318"/>
    <property type="project" value="GO_Central"/>
</dbReference>
<dbReference type="GO" id="GO:0006821">
    <property type="term" value="P:chloride transport"/>
    <property type="evidence" value="ECO:0000250"/>
    <property type="project" value="UniProtKB"/>
</dbReference>
<dbReference type="GO" id="GO:0019532">
    <property type="term" value="P:oxalate transport"/>
    <property type="evidence" value="ECO:0000250"/>
    <property type="project" value="UniProtKB"/>
</dbReference>
<dbReference type="GO" id="GO:1902358">
    <property type="term" value="P:sulfate transmembrane transport"/>
    <property type="evidence" value="ECO:0000250"/>
    <property type="project" value="UniProtKB"/>
</dbReference>
<dbReference type="CDD" id="cd07042">
    <property type="entry name" value="STAS_SulP_like_sulfate_transporter"/>
    <property type="match status" value="1"/>
</dbReference>
<dbReference type="Gene3D" id="3.30.750.24">
    <property type="entry name" value="STAS domain"/>
    <property type="match status" value="1"/>
</dbReference>
<dbReference type="InterPro" id="IPR018045">
    <property type="entry name" value="S04_transporter_CS"/>
</dbReference>
<dbReference type="InterPro" id="IPR011547">
    <property type="entry name" value="SLC26A/SulP_dom"/>
</dbReference>
<dbReference type="InterPro" id="IPR001902">
    <property type="entry name" value="SLC26A/SulP_fam"/>
</dbReference>
<dbReference type="InterPro" id="IPR002645">
    <property type="entry name" value="STAS_dom"/>
</dbReference>
<dbReference type="InterPro" id="IPR036513">
    <property type="entry name" value="STAS_dom_sf"/>
</dbReference>
<dbReference type="NCBIfam" id="TIGR00815">
    <property type="entry name" value="sulP"/>
    <property type="match status" value="1"/>
</dbReference>
<dbReference type="PANTHER" id="PTHR11814">
    <property type="entry name" value="SULFATE TRANSPORTER"/>
    <property type="match status" value="1"/>
</dbReference>
<dbReference type="Pfam" id="PF01740">
    <property type="entry name" value="STAS"/>
    <property type="match status" value="1"/>
</dbReference>
<dbReference type="Pfam" id="PF00916">
    <property type="entry name" value="Sulfate_transp"/>
    <property type="match status" value="1"/>
</dbReference>
<dbReference type="SUPFAM" id="SSF52091">
    <property type="entry name" value="SpoIIaa-like"/>
    <property type="match status" value="1"/>
</dbReference>
<dbReference type="PROSITE" id="PS01130">
    <property type="entry name" value="SLC26A"/>
    <property type="match status" value="1"/>
</dbReference>
<dbReference type="PROSITE" id="PS50801">
    <property type="entry name" value="STAS"/>
    <property type="match status" value="1"/>
</dbReference>
<protein>
    <recommendedName>
        <fullName>Sulfate anion transporter 1</fullName>
        <shortName>SAT-1</shortName>
    </recommendedName>
    <alternativeName>
        <fullName>Solute carrier family 26 member 1</fullName>
    </alternativeName>
</protein>
<name>S26A1_HUMAN</name>
<organism>
    <name type="scientific">Homo sapiens</name>
    <name type="common">Human</name>
    <dbReference type="NCBI Taxonomy" id="9606"/>
    <lineage>
        <taxon>Eukaryota</taxon>
        <taxon>Metazoa</taxon>
        <taxon>Chordata</taxon>
        <taxon>Craniata</taxon>
        <taxon>Vertebrata</taxon>
        <taxon>Euteleostomi</taxon>
        <taxon>Mammalia</taxon>
        <taxon>Eutheria</taxon>
        <taxon>Euarchontoglires</taxon>
        <taxon>Primates</taxon>
        <taxon>Haplorrhini</taxon>
        <taxon>Catarrhini</taxon>
        <taxon>Hominidae</taxon>
        <taxon>Homo</taxon>
    </lineage>
</organism>